<name>TPIS_STRP3</name>
<reference key="1">
    <citation type="journal article" date="2002" name="Proc. Natl. Acad. Sci. U.S.A.">
        <title>Genome sequence of a serotype M3 strain of group A Streptococcus: phage-encoded toxins, the high-virulence phenotype, and clone emergence.</title>
        <authorList>
            <person name="Beres S.B."/>
            <person name="Sylva G.L."/>
            <person name="Barbian K.D."/>
            <person name="Lei B."/>
            <person name="Hoff J.S."/>
            <person name="Mammarella N.D."/>
            <person name="Liu M.-Y."/>
            <person name="Smoot J.C."/>
            <person name="Porcella S.F."/>
            <person name="Parkins L.D."/>
            <person name="Campbell D.S."/>
            <person name="Smith T.M."/>
            <person name="McCormick J.K."/>
            <person name="Leung D.Y.M."/>
            <person name="Schlievert P.M."/>
            <person name="Musser J.M."/>
        </authorList>
    </citation>
    <scope>NUCLEOTIDE SEQUENCE [LARGE SCALE GENOMIC DNA]</scope>
    <source>
        <strain>ATCC BAA-595 / MGAS315</strain>
    </source>
</reference>
<feature type="initiator methionine" description="Removed" evidence="1">
    <location>
        <position position="1"/>
    </location>
</feature>
<feature type="chain" id="PRO_0000090300" description="Triosephosphate isomerase">
    <location>
        <begin position="2"/>
        <end position="252"/>
    </location>
</feature>
<feature type="active site" description="Electrophile" evidence="2">
    <location>
        <position position="96"/>
    </location>
</feature>
<feature type="active site" description="Proton acceptor" evidence="2">
    <location>
        <position position="168"/>
    </location>
</feature>
<feature type="binding site" evidence="2">
    <location>
        <begin position="10"/>
        <end position="12"/>
    </location>
    <ligand>
        <name>substrate</name>
    </ligand>
</feature>
<feature type="binding site" evidence="2">
    <location>
        <position position="174"/>
    </location>
    <ligand>
        <name>substrate</name>
    </ligand>
</feature>
<feature type="binding site" evidence="2">
    <location>
        <position position="214"/>
    </location>
    <ligand>
        <name>substrate</name>
    </ligand>
</feature>
<feature type="binding site" evidence="2">
    <location>
        <begin position="235"/>
        <end position="236"/>
    </location>
    <ligand>
        <name>substrate</name>
    </ligand>
</feature>
<gene>
    <name evidence="2" type="primary">tpiA</name>
    <name type="synonym">tpi</name>
    <name type="ordered locus">SpyM3_0433</name>
</gene>
<organism>
    <name type="scientific">Streptococcus pyogenes serotype M3 (strain ATCC BAA-595 / MGAS315)</name>
    <dbReference type="NCBI Taxonomy" id="198466"/>
    <lineage>
        <taxon>Bacteria</taxon>
        <taxon>Bacillati</taxon>
        <taxon>Bacillota</taxon>
        <taxon>Bacilli</taxon>
        <taxon>Lactobacillales</taxon>
        <taxon>Streptococcaceae</taxon>
        <taxon>Streptococcus</taxon>
    </lineage>
</organism>
<dbReference type="EC" id="5.3.1.1" evidence="2"/>
<dbReference type="EMBL" id="AE014074">
    <property type="protein sequence ID" value="AAM79040.1"/>
    <property type="molecule type" value="Genomic_DNA"/>
</dbReference>
<dbReference type="RefSeq" id="WP_002990539.1">
    <property type="nucleotide sequence ID" value="NC_004070.1"/>
</dbReference>
<dbReference type="SMR" id="P0DG10"/>
<dbReference type="GeneID" id="69901181"/>
<dbReference type="KEGG" id="spg:SpyM3_0433"/>
<dbReference type="HOGENOM" id="CLU_024251_2_3_9"/>
<dbReference type="UniPathway" id="UPA00109">
    <property type="reaction ID" value="UER00189"/>
</dbReference>
<dbReference type="UniPathway" id="UPA00138"/>
<dbReference type="Proteomes" id="UP000000564">
    <property type="component" value="Chromosome"/>
</dbReference>
<dbReference type="GO" id="GO:0005829">
    <property type="term" value="C:cytosol"/>
    <property type="evidence" value="ECO:0007669"/>
    <property type="project" value="TreeGrafter"/>
</dbReference>
<dbReference type="GO" id="GO:0004807">
    <property type="term" value="F:triose-phosphate isomerase activity"/>
    <property type="evidence" value="ECO:0007669"/>
    <property type="project" value="UniProtKB-UniRule"/>
</dbReference>
<dbReference type="GO" id="GO:0006094">
    <property type="term" value="P:gluconeogenesis"/>
    <property type="evidence" value="ECO:0007669"/>
    <property type="project" value="UniProtKB-UniRule"/>
</dbReference>
<dbReference type="GO" id="GO:0046166">
    <property type="term" value="P:glyceraldehyde-3-phosphate biosynthetic process"/>
    <property type="evidence" value="ECO:0007669"/>
    <property type="project" value="TreeGrafter"/>
</dbReference>
<dbReference type="GO" id="GO:0019563">
    <property type="term" value="P:glycerol catabolic process"/>
    <property type="evidence" value="ECO:0007669"/>
    <property type="project" value="TreeGrafter"/>
</dbReference>
<dbReference type="GO" id="GO:0006096">
    <property type="term" value="P:glycolytic process"/>
    <property type="evidence" value="ECO:0007669"/>
    <property type="project" value="UniProtKB-UniRule"/>
</dbReference>
<dbReference type="CDD" id="cd00311">
    <property type="entry name" value="TIM"/>
    <property type="match status" value="1"/>
</dbReference>
<dbReference type="FunFam" id="3.20.20.70:FF:000016">
    <property type="entry name" value="Triosephosphate isomerase"/>
    <property type="match status" value="1"/>
</dbReference>
<dbReference type="Gene3D" id="3.20.20.70">
    <property type="entry name" value="Aldolase class I"/>
    <property type="match status" value="1"/>
</dbReference>
<dbReference type="HAMAP" id="MF_00147_B">
    <property type="entry name" value="TIM_B"/>
    <property type="match status" value="1"/>
</dbReference>
<dbReference type="InterPro" id="IPR013785">
    <property type="entry name" value="Aldolase_TIM"/>
</dbReference>
<dbReference type="InterPro" id="IPR035990">
    <property type="entry name" value="TIM_sf"/>
</dbReference>
<dbReference type="InterPro" id="IPR022896">
    <property type="entry name" value="TrioseP_Isoase_bac/euk"/>
</dbReference>
<dbReference type="InterPro" id="IPR000652">
    <property type="entry name" value="Triosephosphate_isomerase"/>
</dbReference>
<dbReference type="InterPro" id="IPR020861">
    <property type="entry name" value="Triosephosphate_isomerase_AS"/>
</dbReference>
<dbReference type="NCBIfam" id="TIGR00419">
    <property type="entry name" value="tim"/>
    <property type="match status" value="1"/>
</dbReference>
<dbReference type="PANTHER" id="PTHR21139">
    <property type="entry name" value="TRIOSEPHOSPHATE ISOMERASE"/>
    <property type="match status" value="1"/>
</dbReference>
<dbReference type="PANTHER" id="PTHR21139:SF42">
    <property type="entry name" value="TRIOSEPHOSPHATE ISOMERASE"/>
    <property type="match status" value="1"/>
</dbReference>
<dbReference type="Pfam" id="PF00121">
    <property type="entry name" value="TIM"/>
    <property type="match status" value="1"/>
</dbReference>
<dbReference type="SUPFAM" id="SSF51351">
    <property type="entry name" value="Triosephosphate isomerase (TIM)"/>
    <property type="match status" value="1"/>
</dbReference>
<dbReference type="PROSITE" id="PS00171">
    <property type="entry name" value="TIM_1"/>
    <property type="match status" value="1"/>
</dbReference>
<dbReference type="PROSITE" id="PS51440">
    <property type="entry name" value="TIM_2"/>
    <property type="match status" value="1"/>
</dbReference>
<accession>P0DG10</accession>
<accession>P69888</accession>
<accession>P82478</accession>
<evidence type="ECO:0000250" key="1"/>
<evidence type="ECO:0000255" key="2">
    <source>
        <dbReference type="HAMAP-Rule" id="MF_00147"/>
    </source>
</evidence>
<protein>
    <recommendedName>
        <fullName evidence="2">Triosephosphate isomerase</fullName>
        <shortName evidence="2">TIM</shortName>
        <shortName evidence="2">TPI</shortName>
        <ecNumber evidence="2">5.3.1.1</ecNumber>
    </recommendedName>
    <alternativeName>
        <fullName evidence="2">Triose-phosphate isomerase</fullName>
    </alternativeName>
</protein>
<proteinExistence type="inferred from homology"/>
<sequence length="252" mass="26618">MSRKPIIAGNWKMNKNPQEAKAFVEAVASKLPSTDLVDVAVAAPAVDLVTTIEAAKDSVLKVAAQNCYFENTGAFTGETSPKVLAEMGADYVVIGHSERRDYFHETDEDINKKAKAIFANGLTPIVCCGESLETYEAGKAVEFVGAQVSAALAGLSAEQVASLVLAYEPIWAIGTGKSATQDDAQNMCKAVRDVVAADFGQEVADKVRVQYGGSVKPENVKDYMACPDVDGALVGGASLEADSFLALLDFLN</sequence>
<comment type="function">
    <text evidence="2">Involved in the gluconeogenesis. Catalyzes stereospecifically the conversion of dihydroxyacetone phosphate (DHAP) to D-glyceraldehyde-3-phosphate (G3P).</text>
</comment>
<comment type="catalytic activity">
    <reaction evidence="2">
        <text>D-glyceraldehyde 3-phosphate = dihydroxyacetone phosphate</text>
        <dbReference type="Rhea" id="RHEA:18585"/>
        <dbReference type="ChEBI" id="CHEBI:57642"/>
        <dbReference type="ChEBI" id="CHEBI:59776"/>
        <dbReference type="EC" id="5.3.1.1"/>
    </reaction>
</comment>
<comment type="pathway">
    <text evidence="2">Carbohydrate biosynthesis; gluconeogenesis.</text>
</comment>
<comment type="pathway">
    <text evidence="2">Carbohydrate degradation; glycolysis; D-glyceraldehyde 3-phosphate from glycerone phosphate: step 1/1.</text>
</comment>
<comment type="subunit">
    <text evidence="2">Homodimer.</text>
</comment>
<comment type="subcellular location">
    <subcellularLocation>
        <location evidence="2">Cytoplasm</location>
    </subcellularLocation>
</comment>
<comment type="similarity">
    <text evidence="2">Belongs to the triosephosphate isomerase family.</text>
</comment>
<keyword id="KW-0963">Cytoplasm</keyword>
<keyword id="KW-0312">Gluconeogenesis</keyword>
<keyword id="KW-0324">Glycolysis</keyword>
<keyword id="KW-0413">Isomerase</keyword>